<protein>
    <recommendedName>
        <fullName>Uncharacterized protein aq_2020</fullName>
    </recommendedName>
</protein>
<dbReference type="EMBL" id="AE000657">
    <property type="protein sequence ID" value="AAC07785.1"/>
    <property type="molecule type" value="Genomic_DNA"/>
</dbReference>
<dbReference type="PIR" id="F70473">
    <property type="entry name" value="F70473"/>
</dbReference>
<dbReference type="RefSeq" id="NP_214387.1">
    <property type="nucleotide sequence ID" value="NC_000918.1"/>
</dbReference>
<dbReference type="SMR" id="O67818"/>
<dbReference type="STRING" id="224324.aq_2020"/>
<dbReference type="EnsemblBacteria" id="AAC07785">
    <property type="protein sequence ID" value="AAC07785"/>
    <property type="gene ID" value="aq_2020"/>
</dbReference>
<dbReference type="KEGG" id="aae:aq_2020"/>
<dbReference type="eggNOG" id="COG1416">
    <property type="taxonomic scope" value="Bacteria"/>
</dbReference>
<dbReference type="HOGENOM" id="CLU_1238104_0_0_0"/>
<dbReference type="InParanoid" id="O67818"/>
<dbReference type="OrthoDB" id="9799127at2"/>
<dbReference type="Proteomes" id="UP000000798">
    <property type="component" value="Chromosome"/>
</dbReference>
<dbReference type="Gene3D" id="3.40.1260.10">
    <property type="entry name" value="DsrEFH-like"/>
    <property type="match status" value="1"/>
</dbReference>
<dbReference type="InterPro" id="IPR027396">
    <property type="entry name" value="DsrEFH-like"/>
</dbReference>
<dbReference type="InterPro" id="IPR003787">
    <property type="entry name" value="Sulphur_relay_DsrE/F-like"/>
</dbReference>
<dbReference type="Pfam" id="PF02635">
    <property type="entry name" value="DsrE"/>
    <property type="match status" value="1"/>
</dbReference>
<dbReference type="SUPFAM" id="SSF75169">
    <property type="entry name" value="DsrEFH-like"/>
    <property type="match status" value="1"/>
</dbReference>
<sequence>MPELQGKPLRFYLLRLTTTLPLTTYLNLWPRSLLPFSFTLWDPTTTGTEKRGLPRSYSQSERLCSSSLQKSSSELKSKIIMKKFFLFLVLPIFLFASPLKAVFDCAVGDLDWISLRLSLIKKTAEQLMEEGKSYRFVITIHSHCIKVVDADLKKFPESERRKIELIQSQLKTLKEMYSVDVKACQIAMNRGKIKKVPPFVETVPNSWITLIELQNKGFAFVPF</sequence>
<accession>O67818</accession>
<feature type="chain" id="PRO_0000186964" description="Uncharacterized protein aq_2020">
    <location>
        <begin position="1"/>
        <end position="223"/>
    </location>
</feature>
<gene>
    <name type="ordered locus">aq_2020</name>
</gene>
<keyword id="KW-1185">Reference proteome</keyword>
<name>Y2020_AQUAE</name>
<reference key="1">
    <citation type="journal article" date="1998" name="Nature">
        <title>The complete genome of the hyperthermophilic bacterium Aquifex aeolicus.</title>
        <authorList>
            <person name="Deckert G."/>
            <person name="Warren P.V."/>
            <person name="Gaasterland T."/>
            <person name="Young W.G."/>
            <person name="Lenox A.L."/>
            <person name="Graham D.E."/>
            <person name="Overbeek R."/>
            <person name="Snead M.A."/>
            <person name="Keller M."/>
            <person name="Aujay M."/>
            <person name="Huber R."/>
            <person name="Feldman R.A."/>
            <person name="Short J.M."/>
            <person name="Olsen G.J."/>
            <person name="Swanson R.V."/>
        </authorList>
    </citation>
    <scope>NUCLEOTIDE SEQUENCE [LARGE SCALE GENOMIC DNA]</scope>
    <source>
        <strain>VF5</strain>
    </source>
</reference>
<organism>
    <name type="scientific">Aquifex aeolicus (strain VF5)</name>
    <dbReference type="NCBI Taxonomy" id="224324"/>
    <lineage>
        <taxon>Bacteria</taxon>
        <taxon>Pseudomonadati</taxon>
        <taxon>Aquificota</taxon>
        <taxon>Aquificia</taxon>
        <taxon>Aquificales</taxon>
        <taxon>Aquificaceae</taxon>
        <taxon>Aquifex</taxon>
    </lineage>
</organism>
<proteinExistence type="predicted"/>